<dbReference type="EC" id="2.1.3.15" evidence="1"/>
<dbReference type="EMBL" id="AE009951">
    <property type="protein sequence ID" value="AAL94611.1"/>
    <property type="molecule type" value="Genomic_DNA"/>
</dbReference>
<dbReference type="RefSeq" id="NP_603312.1">
    <property type="nucleotide sequence ID" value="NC_003454.1"/>
</dbReference>
<dbReference type="RefSeq" id="WP_005902759.1">
    <property type="nucleotide sequence ID" value="NZ_OZ209243.1"/>
</dbReference>
<dbReference type="SMR" id="Q8RGA0"/>
<dbReference type="FunCoup" id="Q8RGA0">
    <property type="interactions" value="195"/>
</dbReference>
<dbReference type="STRING" id="190304.FN0408"/>
<dbReference type="PaxDb" id="190304-FN0408"/>
<dbReference type="EnsemblBacteria" id="AAL94611">
    <property type="protein sequence ID" value="AAL94611"/>
    <property type="gene ID" value="FN0408"/>
</dbReference>
<dbReference type="GeneID" id="79783414"/>
<dbReference type="KEGG" id="fnu:FN0408"/>
<dbReference type="PATRIC" id="fig|190304.8.peg.983"/>
<dbReference type="eggNOG" id="COG0777">
    <property type="taxonomic scope" value="Bacteria"/>
</dbReference>
<dbReference type="HOGENOM" id="CLU_015486_1_0_0"/>
<dbReference type="InParanoid" id="Q8RGA0"/>
<dbReference type="BioCyc" id="FNUC190304:G1FZS-1002-MONOMER"/>
<dbReference type="UniPathway" id="UPA00655">
    <property type="reaction ID" value="UER00711"/>
</dbReference>
<dbReference type="Proteomes" id="UP000002521">
    <property type="component" value="Chromosome"/>
</dbReference>
<dbReference type="GO" id="GO:0009317">
    <property type="term" value="C:acetyl-CoA carboxylase complex"/>
    <property type="evidence" value="ECO:0007669"/>
    <property type="project" value="InterPro"/>
</dbReference>
<dbReference type="GO" id="GO:0003989">
    <property type="term" value="F:acetyl-CoA carboxylase activity"/>
    <property type="evidence" value="ECO:0007669"/>
    <property type="project" value="InterPro"/>
</dbReference>
<dbReference type="GO" id="GO:0005524">
    <property type="term" value="F:ATP binding"/>
    <property type="evidence" value="ECO:0007669"/>
    <property type="project" value="UniProtKB-KW"/>
</dbReference>
<dbReference type="GO" id="GO:0016743">
    <property type="term" value="F:carboxyl- or carbamoyltransferase activity"/>
    <property type="evidence" value="ECO:0007669"/>
    <property type="project" value="UniProtKB-UniRule"/>
</dbReference>
<dbReference type="GO" id="GO:0008270">
    <property type="term" value="F:zinc ion binding"/>
    <property type="evidence" value="ECO:0007669"/>
    <property type="project" value="UniProtKB-UniRule"/>
</dbReference>
<dbReference type="GO" id="GO:0006633">
    <property type="term" value="P:fatty acid biosynthetic process"/>
    <property type="evidence" value="ECO:0000318"/>
    <property type="project" value="GO_Central"/>
</dbReference>
<dbReference type="GO" id="GO:2001295">
    <property type="term" value="P:malonyl-CoA biosynthetic process"/>
    <property type="evidence" value="ECO:0007669"/>
    <property type="project" value="UniProtKB-UniRule"/>
</dbReference>
<dbReference type="Gene3D" id="3.90.226.10">
    <property type="entry name" value="2-enoyl-CoA Hydratase, Chain A, domain 1"/>
    <property type="match status" value="1"/>
</dbReference>
<dbReference type="HAMAP" id="MF_01395">
    <property type="entry name" value="AcetylCoA_CT_beta"/>
    <property type="match status" value="1"/>
</dbReference>
<dbReference type="InterPro" id="IPR034733">
    <property type="entry name" value="AcCoA_carboxyl_beta"/>
</dbReference>
<dbReference type="InterPro" id="IPR000438">
    <property type="entry name" value="Acetyl_CoA_COase_Trfase_b_su"/>
</dbReference>
<dbReference type="InterPro" id="IPR029045">
    <property type="entry name" value="ClpP/crotonase-like_dom_sf"/>
</dbReference>
<dbReference type="InterPro" id="IPR011762">
    <property type="entry name" value="COA_CT_N"/>
</dbReference>
<dbReference type="NCBIfam" id="TIGR00515">
    <property type="entry name" value="accD"/>
    <property type="match status" value="1"/>
</dbReference>
<dbReference type="PANTHER" id="PTHR42995">
    <property type="entry name" value="ACETYL-COENZYME A CARBOXYLASE CARBOXYL TRANSFERASE SUBUNIT BETA, CHLOROPLASTIC"/>
    <property type="match status" value="1"/>
</dbReference>
<dbReference type="PANTHER" id="PTHR42995:SF5">
    <property type="entry name" value="ACETYL-COENZYME A CARBOXYLASE CARBOXYL TRANSFERASE SUBUNIT BETA, CHLOROPLASTIC"/>
    <property type="match status" value="1"/>
</dbReference>
<dbReference type="Pfam" id="PF01039">
    <property type="entry name" value="Carboxyl_trans"/>
    <property type="match status" value="1"/>
</dbReference>
<dbReference type="PRINTS" id="PR01070">
    <property type="entry name" value="ACCCTRFRASEB"/>
</dbReference>
<dbReference type="SUPFAM" id="SSF52096">
    <property type="entry name" value="ClpP/crotonase"/>
    <property type="match status" value="1"/>
</dbReference>
<dbReference type="PROSITE" id="PS50980">
    <property type="entry name" value="COA_CT_NTER"/>
    <property type="match status" value="1"/>
</dbReference>
<name>ACCD_FUSNN</name>
<gene>
    <name evidence="1" type="primary">accD</name>
    <name type="ordered locus">FN0408</name>
</gene>
<comment type="function">
    <text evidence="1">Component of the acetyl coenzyme A carboxylase (ACC) complex. Biotin carboxylase (BC) catalyzes the carboxylation of biotin on its carrier protein (BCCP) and then the CO(2) group is transferred by the transcarboxylase to acetyl-CoA to form malonyl-CoA.</text>
</comment>
<comment type="catalytic activity">
    <reaction evidence="1">
        <text>N(6)-carboxybiotinyl-L-lysyl-[protein] + acetyl-CoA = N(6)-biotinyl-L-lysyl-[protein] + malonyl-CoA</text>
        <dbReference type="Rhea" id="RHEA:54728"/>
        <dbReference type="Rhea" id="RHEA-COMP:10505"/>
        <dbReference type="Rhea" id="RHEA-COMP:10506"/>
        <dbReference type="ChEBI" id="CHEBI:57288"/>
        <dbReference type="ChEBI" id="CHEBI:57384"/>
        <dbReference type="ChEBI" id="CHEBI:83144"/>
        <dbReference type="ChEBI" id="CHEBI:83145"/>
        <dbReference type="EC" id="2.1.3.15"/>
    </reaction>
</comment>
<comment type="cofactor">
    <cofactor evidence="1">
        <name>Zn(2+)</name>
        <dbReference type="ChEBI" id="CHEBI:29105"/>
    </cofactor>
    <text evidence="1">Binds 1 zinc ion per subunit.</text>
</comment>
<comment type="pathway">
    <text evidence="1">Lipid metabolism; malonyl-CoA biosynthesis; malonyl-CoA from acetyl-CoA: step 1/1.</text>
</comment>
<comment type="subunit">
    <text evidence="1">Acetyl-CoA carboxylase is a heterohexamer composed of biotin carboxyl carrier protein (AccB), biotin carboxylase (AccC) and two subunits each of ACCase subunit alpha (AccA) and ACCase subunit beta (AccD).</text>
</comment>
<comment type="subcellular location">
    <subcellularLocation>
        <location evidence="1">Cytoplasm</location>
    </subcellularLocation>
</comment>
<comment type="similarity">
    <text evidence="1">Belongs to the AccD/PCCB family.</text>
</comment>
<reference key="1">
    <citation type="journal article" date="2002" name="J. Bacteriol.">
        <title>Genome sequence and analysis of the oral bacterium Fusobacterium nucleatum strain ATCC 25586.</title>
        <authorList>
            <person name="Kapatral V."/>
            <person name="Anderson I."/>
            <person name="Ivanova N."/>
            <person name="Reznik G."/>
            <person name="Los T."/>
            <person name="Lykidis A."/>
            <person name="Bhattacharyya A."/>
            <person name="Bartman A."/>
            <person name="Gardner W."/>
            <person name="Grechkin G."/>
            <person name="Zhu L."/>
            <person name="Vasieva O."/>
            <person name="Chu L."/>
            <person name="Kogan Y."/>
            <person name="Chaga O."/>
            <person name="Goltsman E."/>
            <person name="Bernal A."/>
            <person name="Larsen N."/>
            <person name="D'Souza M."/>
            <person name="Walunas T."/>
            <person name="Pusch G."/>
            <person name="Haselkorn R."/>
            <person name="Fonstein M."/>
            <person name="Kyrpides N.C."/>
            <person name="Overbeek R."/>
        </authorList>
    </citation>
    <scope>NUCLEOTIDE SEQUENCE [LARGE SCALE GENOMIC DNA]</scope>
    <source>
        <strain>ATCC 25586 / DSM 15643 / BCRC 10681 / CIP 101130 / JCM 8532 / KCTC 2640 / LMG 13131 / VPI 4355</strain>
    </source>
</reference>
<evidence type="ECO:0000255" key="1">
    <source>
        <dbReference type="HAMAP-Rule" id="MF_01395"/>
    </source>
</evidence>
<evidence type="ECO:0000255" key="2">
    <source>
        <dbReference type="PROSITE-ProRule" id="PRU01136"/>
    </source>
</evidence>
<sequence>MSILKNLAKNLGLTNITQPKKKYATVGEKKSDEEKERAKYKVKNIDNLKEDEVTKCPSCGVLSHKSEIRANMKMCSNCNHYFNMSARERIELLIDEGTFKEEDVTLTSANPINFPEYVEKIEKAQHDSGMNEGVISGLGEINGLKVSIACMDFNFMGGSMGSVVGEKITAALERAIEHKIPAVVVAISGGARMQEGLTSLMQMAKTSAAVKKMRLAGLPFISVPVNPTTGGVTASFAMLGDIIISEPKARIGFAGPRVIEQTIRQKLPENFQKSEFLQECGMVDVIAKREDLKATIFKVLNDII</sequence>
<proteinExistence type="inferred from homology"/>
<protein>
    <recommendedName>
        <fullName evidence="1">Acetyl-coenzyme A carboxylase carboxyl transferase subunit beta</fullName>
        <shortName evidence="1">ACCase subunit beta</shortName>
        <shortName evidence="1">Acetyl-CoA carboxylase carboxyltransferase subunit beta</shortName>
        <ecNumber evidence="1">2.1.3.15</ecNumber>
    </recommendedName>
</protein>
<accession>Q8RGA0</accession>
<keyword id="KW-0067">ATP-binding</keyword>
<keyword id="KW-0963">Cytoplasm</keyword>
<keyword id="KW-0275">Fatty acid biosynthesis</keyword>
<keyword id="KW-0276">Fatty acid metabolism</keyword>
<keyword id="KW-0444">Lipid biosynthesis</keyword>
<keyword id="KW-0443">Lipid metabolism</keyword>
<keyword id="KW-0479">Metal-binding</keyword>
<keyword id="KW-0547">Nucleotide-binding</keyword>
<keyword id="KW-1185">Reference proteome</keyword>
<keyword id="KW-0808">Transferase</keyword>
<keyword id="KW-0862">Zinc</keyword>
<keyword id="KW-0863">Zinc-finger</keyword>
<organism>
    <name type="scientific">Fusobacterium nucleatum subsp. nucleatum (strain ATCC 25586 / DSM 15643 / BCRC 10681 / CIP 101130 / JCM 8532 / KCTC 2640 / LMG 13131 / VPI 4355)</name>
    <dbReference type="NCBI Taxonomy" id="190304"/>
    <lineage>
        <taxon>Bacteria</taxon>
        <taxon>Fusobacteriati</taxon>
        <taxon>Fusobacteriota</taxon>
        <taxon>Fusobacteriia</taxon>
        <taxon>Fusobacteriales</taxon>
        <taxon>Fusobacteriaceae</taxon>
        <taxon>Fusobacterium</taxon>
    </lineage>
</organism>
<feature type="chain" id="PRO_0000389745" description="Acetyl-coenzyme A carboxylase carboxyl transferase subunit beta">
    <location>
        <begin position="1"/>
        <end position="304"/>
    </location>
</feature>
<feature type="domain" description="CoA carboxyltransferase N-terminal" evidence="2">
    <location>
        <begin position="52"/>
        <end position="304"/>
    </location>
</feature>
<feature type="zinc finger region" description="C4-type" evidence="1">
    <location>
        <begin position="56"/>
        <end position="78"/>
    </location>
</feature>
<feature type="binding site" evidence="1">
    <location>
        <position position="56"/>
    </location>
    <ligand>
        <name>Zn(2+)</name>
        <dbReference type="ChEBI" id="CHEBI:29105"/>
    </ligand>
</feature>
<feature type="binding site" evidence="1">
    <location>
        <position position="59"/>
    </location>
    <ligand>
        <name>Zn(2+)</name>
        <dbReference type="ChEBI" id="CHEBI:29105"/>
    </ligand>
</feature>
<feature type="binding site" evidence="1">
    <location>
        <position position="75"/>
    </location>
    <ligand>
        <name>Zn(2+)</name>
        <dbReference type="ChEBI" id="CHEBI:29105"/>
    </ligand>
</feature>
<feature type="binding site" evidence="1">
    <location>
        <position position="78"/>
    </location>
    <ligand>
        <name>Zn(2+)</name>
        <dbReference type="ChEBI" id="CHEBI:29105"/>
    </ligand>
</feature>